<feature type="chain" id="PRO_1000135779" description="3-isopropylmalate dehydratase small subunit">
    <location>
        <begin position="1"/>
        <end position="215"/>
    </location>
</feature>
<name>LEUD_ACIBS</name>
<protein>
    <recommendedName>
        <fullName evidence="1">3-isopropylmalate dehydratase small subunit</fullName>
        <ecNumber evidence="1">4.2.1.33</ecNumber>
    </recommendedName>
    <alternativeName>
        <fullName evidence="1">Alpha-IPM isomerase</fullName>
        <shortName evidence="1">IPMI</shortName>
    </alternativeName>
    <alternativeName>
        <fullName evidence="1">Isopropylmalate isomerase</fullName>
    </alternativeName>
</protein>
<sequence length="215" mass="24371">MKAYTVEQGIVAPLDRANVDTDLIIPKQFLKSIKRTGFGDNLFDELRYLDEGYPGQDNSVRPKNPDFVLNQPRYQGATVLIARTNFGCGSSREHAPWALNEYGFRTVIAPSFADIFFNNCFKNGMLPVILPEDIVDQLFKECAAQEGYQLTIDLAAQEVRTPTGEAFKFEVDPFRKHCLLNGLDDIGLTLQNADAIRAYEEKTKQVRPWVFQEIN</sequence>
<organism>
    <name type="scientific">Acinetobacter baumannii (strain SDF)</name>
    <dbReference type="NCBI Taxonomy" id="509170"/>
    <lineage>
        <taxon>Bacteria</taxon>
        <taxon>Pseudomonadati</taxon>
        <taxon>Pseudomonadota</taxon>
        <taxon>Gammaproteobacteria</taxon>
        <taxon>Moraxellales</taxon>
        <taxon>Moraxellaceae</taxon>
        <taxon>Acinetobacter</taxon>
        <taxon>Acinetobacter calcoaceticus/baumannii complex</taxon>
    </lineage>
</organism>
<proteinExistence type="inferred from homology"/>
<accession>B0VLB1</accession>
<keyword id="KW-0028">Amino-acid biosynthesis</keyword>
<keyword id="KW-0100">Branched-chain amino acid biosynthesis</keyword>
<keyword id="KW-0432">Leucine biosynthesis</keyword>
<keyword id="KW-0456">Lyase</keyword>
<comment type="function">
    <text evidence="1">Catalyzes the isomerization between 2-isopropylmalate and 3-isopropylmalate, via the formation of 2-isopropylmaleate.</text>
</comment>
<comment type="catalytic activity">
    <reaction evidence="1">
        <text>(2R,3S)-3-isopropylmalate = (2S)-2-isopropylmalate</text>
        <dbReference type="Rhea" id="RHEA:32287"/>
        <dbReference type="ChEBI" id="CHEBI:1178"/>
        <dbReference type="ChEBI" id="CHEBI:35121"/>
        <dbReference type="EC" id="4.2.1.33"/>
    </reaction>
</comment>
<comment type="pathway">
    <text evidence="1">Amino-acid biosynthesis; L-leucine biosynthesis; L-leucine from 3-methyl-2-oxobutanoate: step 2/4.</text>
</comment>
<comment type="subunit">
    <text evidence="1">Heterodimer of LeuC and LeuD.</text>
</comment>
<comment type="similarity">
    <text evidence="1">Belongs to the LeuD family. LeuD type 1 subfamily.</text>
</comment>
<reference key="1">
    <citation type="journal article" date="2008" name="PLoS ONE">
        <title>Comparative analysis of Acinetobacters: three genomes for three lifestyles.</title>
        <authorList>
            <person name="Vallenet D."/>
            <person name="Nordmann P."/>
            <person name="Barbe V."/>
            <person name="Poirel L."/>
            <person name="Mangenot S."/>
            <person name="Bataille E."/>
            <person name="Dossat C."/>
            <person name="Gas S."/>
            <person name="Kreimeyer A."/>
            <person name="Lenoble P."/>
            <person name="Oztas S."/>
            <person name="Poulain J."/>
            <person name="Segurens B."/>
            <person name="Robert C."/>
            <person name="Abergel C."/>
            <person name="Claverie J.-M."/>
            <person name="Raoult D."/>
            <person name="Medigue C."/>
            <person name="Weissenbach J."/>
            <person name="Cruveiller S."/>
        </authorList>
    </citation>
    <scope>NUCLEOTIDE SEQUENCE [LARGE SCALE GENOMIC DNA]</scope>
    <source>
        <strain>SDF</strain>
    </source>
</reference>
<evidence type="ECO:0000255" key="1">
    <source>
        <dbReference type="HAMAP-Rule" id="MF_01031"/>
    </source>
</evidence>
<gene>
    <name evidence="1" type="primary">leuD</name>
    <name type="ordered locus">ABSDF3097</name>
</gene>
<dbReference type="EC" id="4.2.1.33" evidence="1"/>
<dbReference type="EMBL" id="CU468230">
    <property type="protein sequence ID" value="CAP02379.1"/>
    <property type="molecule type" value="Genomic_DNA"/>
</dbReference>
<dbReference type="SMR" id="B0VLB1"/>
<dbReference type="KEGG" id="abm:ABSDF3097"/>
<dbReference type="HOGENOM" id="CLU_081378_0_3_6"/>
<dbReference type="UniPathway" id="UPA00048">
    <property type="reaction ID" value="UER00071"/>
</dbReference>
<dbReference type="Proteomes" id="UP000001741">
    <property type="component" value="Chromosome"/>
</dbReference>
<dbReference type="GO" id="GO:0009316">
    <property type="term" value="C:3-isopropylmalate dehydratase complex"/>
    <property type="evidence" value="ECO:0007669"/>
    <property type="project" value="InterPro"/>
</dbReference>
<dbReference type="GO" id="GO:0003861">
    <property type="term" value="F:3-isopropylmalate dehydratase activity"/>
    <property type="evidence" value="ECO:0007669"/>
    <property type="project" value="UniProtKB-UniRule"/>
</dbReference>
<dbReference type="GO" id="GO:0009098">
    <property type="term" value="P:L-leucine biosynthetic process"/>
    <property type="evidence" value="ECO:0007669"/>
    <property type="project" value="UniProtKB-UniRule"/>
</dbReference>
<dbReference type="CDD" id="cd01577">
    <property type="entry name" value="IPMI_Swivel"/>
    <property type="match status" value="1"/>
</dbReference>
<dbReference type="FunFam" id="3.20.19.10:FF:000003">
    <property type="entry name" value="3-isopropylmalate dehydratase small subunit"/>
    <property type="match status" value="1"/>
</dbReference>
<dbReference type="Gene3D" id="3.20.19.10">
    <property type="entry name" value="Aconitase, domain 4"/>
    <property type="match status" value="1"/>
</dbReference>
<dbReference type="HAMAP" id="MF_01031">
    <property type="entry name" value="LeuD_type1"/>
    <property type="match status" value="1"/>
</dbReference>
<dbReference type="InterPro" id="IPR004431">
    <property type="entry name" value="3-IsopropMal_deHydase_ssu"/>
</dbReference>
<dbReference type="InterPro" id="IPR015928">
    <property type="entry name" value="Aconitase/3IPM_dehydase_swvl"/>
</dbReference>
<dbReference type="InterPro" id="IPR000573">
    <property type="entry name" value="AconitaseA/IPMdHydase_ssu_swvl"/>
</dbReference>
<dbReference type="InterPro" id="IPR033940">
    <property type="entry name" value="IPMI_Swivel"/>
</dbReference>
<dbReference type="InterPro" id="IPR050075">
    <property type="entry name" value="LeuD"/>
</dbReference>
<dbReference type="NCBIfam" id="TIGR00171">
    <property type="entry name" value="leuD"/>
    <property type="match status" value="1"/>
</dbReference>
<dbReference type="NCBIfam" id="NF002458">
    <property type="entry name" value="PRK01641.1"/>
    <property type="match status" value="1"/>
</dbReference>
<dbReference type="PANTHER" id="PTHR43345:SF5">
    <property type="entry name" value="3-ISOPROPYLMALATE DEHYDRATASE SMALL SUBUNIT"/>
    <property type="match status" value="1"/>
</dbReference>
<dbReference type="PANTHER" id="PTHR43345">
    <property type="entry name" value="3-ISOPROPYLMALATE DEHYDRATASE SMALL SUBUNIT 2-RELATED-RELATED"/>
    <property type="match status" value="1"/>
</dbReference>
<dbReference type="Pfam" id="PF00694">
    <property type="entry name" value="Aconitase_C"/>
    <property type="match status" value="1"/>
</dbReference>
<dbReference type="SUPFAM" id="SSF52016">
    <property type="entry name" value="LeuD/IlvD-like"/>
    <property type="match status" value="1"/>
</dbReference>